<comment type="function">
    <text evidence="1">Isomerase that catalyzes the conversion of deoxy-ribose 1-phosphate (dRib-1-P) and ribose 1-phosphate (Rib-1-P) to deoxy-ribose 5-phosphate (dRib-5-P) and ribose 5-phosphate (Rib-5-P), respectively.</text>
</comment>
<comment type="catalytic activity">
    <reaction evidence="1">
        <text>2-deoxy-alpha-D-ribose 1-phosphate = 2-deoxy-D-ribose 5-phosphate</text>
        <dbReference type="Rhea" id="RHEA:27658"/>
        <dbReference type="ChEBI" id="CHEBI:57259"/>
        <dbReference type="ChEBI" id="CHEBI:62877"/>
        <dbReference type="EC" id="5.4.2.7"/>
    </reaction>
</comment>
<comment type="catalytic activity">
    <reaction evidence="1">
        <text>alpha-D-ribose 1-phosphate = D-ribose 5-phosphate</text>
        <dbReference type="Rhea" id="RHEA:18793"/>
        <dbReference type="ChEBI" id="CHEBI:57720"/>
        <dbReference type="ChEBI" id="CHEBI:78346"/>
        <dbReference type="EC" id="5.4.2.7"/>
    </reaction>
</comment>
<comment type="cofactor">
    <cofactor evidence="1">
        <name>Mn(2+)</name>
        <dbReference type="ChEBI" id="CHEBI:29035"/>
    </cofactor>
    <text evidence="1">Binds 2 manganese ions.</text>
</comment>
<comment type="pathway">
    <text evidence="1">Carbohydrate degradation; 2-deoxy-D-ribose 1-phosphate degradation; D-glyceraldehyde 3-phosphate and acetaldehyde from 2-deoxy-alpha-D-ribose 1-phosphate: step 1/2.</text>
</comment>
<comment type="subcellular location">
    <subcellularLocation>
        <location evidence="1">Cytoplasm</location>
    </subcellularLocation>
</comment>
<comment type="similarity">
    <text evidence="1">Belongs to the phosphopentomutase family.</text>
</comment>
<proteinExistence type="inferred from homology"/>
<feature type="chain" id="PRO_1000148258" description="Phosphopentomutase">
    <location>
        <begin position="1"/>
        <end position="403"/>
    </location>
</feature>
<feature type="binding site" evidence="1">
    <location>
        <position position="13"/>
    </location>
    <ligand>
        <name>Mn(2+)</name>
        <dbReference type="ChEBI" id="CHEBI:29035"/>
        <label>1</label>
    </ligand>
</feature>
<feature type="binding site" evidence="1">
    <location>
        <position position="298"/>
    </location>
    <ligand>
        <name>Mn(2+)</name>
        <dbReference type="ChEBI" id="CHEBI:29035"/>
        <label>2</label>
    </ligand>
</feature>
<feature type="binding site" evidence="1">
    <location>
        <position position="303"/>
    </location>
    <ligand>
        <name>Mn(2+)</name>
        <dbReference type="ChEBI" id="CHEBI:29035"/>
        <label>2</label>
    </ligand>
</feature>
<feature type="binding site" evidence="1">
    <location>
        <position position="339"/>
    </location>
    <ligand>
        <name>Mn(2+)</name>
        <dbReference type="ChEBI" id="CHEBI:29035"/>
        <label>1</label>
    </ligand>
</feature>
<feature type="binding site" evidence="1">
    <location>
        <position position="340"/>
    </location>
    <ligand>
        <name>Mn(2+)</name>
        <dbReference type="ChEBI" id="CHEBI:29035"/>
        <label>1</label>
    </ligand>
</feature>
<feature type="binding site" evidence="1">
    <location>
        <position position="351"/>
    </location>
    <ligand>
        <name>Mn(2+)</name>
        <dbReference type="ChEBI" id="CHEBI:29035"/>
        <label>2</label>
    </ligand>
</feature>
<evidence type="ECO:0000255" key="1">
    <source>
        <dbReference type="HAMAP-Rule" id="MF_00740"/>
    </source>
</evidence>
<protein>
    <recommendedName>
        <fullName evidence="1">Phosphopentomutase</fullName>
        <ecNumber evidence="1">5.4.2.7</ecNumber>
    </recommendedName>
    <alternativeName>
        <fullName evidence="1">Phosphodeoxyribomutase</fullName>
    </alternativeName>
</protein>
<reference key="1">
    <citation type="journal article" date="2010" name="Genome Biol.">
        <title>Structure and dynamics of the pan-genome of Streptococcus pneumoniae and closely related species.</title>
        <authorList>
            <person name="Donati C."/>
            <person name="Hiller N.L."/>
            <person name="Tettelin H."/>
            <person name="Muzzi A."/>
            <person name="Croucher N.J."/>
            <person name="Angiuoli S.V."/>
            <person name="Oggioni M."/>
            <person name="Dunning Hotopp J.C."/>
            <person name="Hu F.Z."/>
            <person name="Riley D.R."/>
            <person name="Covacci A."/>
            <person name="Mitchell T.J."/>
            <person name="Bentley S.D."/>
            <person name="Kilian M."/>
            <person name="Ehrlich G.D."/>
            <person name="Rappuoli R."/>
            <person name="Moxon E.R."/>
            <person name="Masignani V."/>
        </authorList>
    </citation>
    <scope>NUCLEOTIDE SEQUENCE [LARGE SCALE GENOMIC DNA]</scope>
    <source>
        <strain>Taiwan19F-14</strain>
    </source>
</reference>
<name>DEOB_STRZT</name>
<gene>
    <name evidence="1" type="primary">deoB</name>
    <name type="ordered locus">SPT_1373</name>
</gene>
<organism>
    <name type="scientific">Streptococcus pneumoniae (strain Taiwan19F-14)</name>
    <dbReference type="NCBI Taxonomy" id="487213"/>
    <lineage>
        <taxon>Bacteria</taxon>
        <taxon>Bacillati</taxon>
        <taxon>Bacillota</taxon>
        <taxon>Bacilli</taxon>
        <taxon>Lactobacillales</taxon>
        <taxon>Streptococcaceae</taxon>
        <taxon>Streptococcus</taxon>
    </lineage>
</organism>
<keyword id="KW-0963">Cytoplasm</keyword>
<keyword id="KW-0413">Isomerase</keyword>
<keyword id="KW-0464">Manganese</keyword>
<keyword id="KW-0479">Metal-binding</keyword>
<dbReference type="EC" id="5.4.2.7" evidence="1"/>
<dbReference type="EMBL" id="CP000921">
    <property type="protein sequence ID" value="ACO23111.1"/>
    <property type="molecule type" value="Genomic_DNA"/>
</dbReference>
<dbReference type="RefSeq" id="WP_000033102.1">
    <property type="nucleotide sequence ID" value="NC_012469.1"/>
</dbReference>
<dbReference type="SMR" id="C1CS61"/>
<dbReference type="KEGG" id="snt:SPT_1373"/>
<dbReference type="HOGENOM" id="CLU_053861_0_0_9"/>
<dbReference type="UniPathway" id="UPA00002">
    <property type="reaction ID" value="UER00467"/>
</dbReference>
<dbReference type="GO" id="GO:0005829">
    <property type="term" value="C:cytosol"/>
    <property type="evidence" value="ECO:0007669"/>
    <property type="project" value="TreeGrafter"/>
</dbReference>
<dbReference type="GO" id="GO:0000287">
    <property type="term" value="F:magnesium ion binding"/>
    <property type="evidence" value="ECO:0007669"/>
    <property type="project" value="InterPro"/>
</dbReference>
<dbReference type="GO" id="GO:0030145">
    <property type="term" value="F:manganese ion binding"/>
    <property type="evidence" value="ECO:0007669"/>
    <property type="project" value="UniProtKB-UniRule"/>
</dbReference>
<dbReference type="GO" id="GO:0008973">
    <property type="term" value="F:phosphopentomutase activity"/>
    <property type="evidence" value="ECO:0007669"/>
    <property type="project" value="UniProtKB-UniRule"/>
</dbReference>
<dbReference type="GO" id="GO:0006018">
    <property type="term" value="P:2-deoxyribose 1-phosphate catabolic process"/>
    <property type="evidence" value="ECO:0007669"/>
    <property type="project" value="UniProtKB-UniRule"/>
</dbReference>
<dbReference type="GO" id="GO:0006015">
    <property type="term" value="P:5-phosphoribose 1-diphosphate biosynthetic process"/>
    <property type="evidence" value="ECO:0007669"/>
    <property type="project" value="UniProtKB-UniPathway"/>
</dbReference>
<dbReference type="GO" id="GO:0043094">
    <property type="term" value="P:metabolic compound salvage"/>
    <property type="evidence" value="ECO:0007669"/>
    <property type="project" value="InterPro"/>
</dbReference>
<dbReference type="GO" id="GO:0009117">
    <property type="term" value="P:nucleotide metabolic process"/>
    <property type="evidence" value="ECO:0007669"/>
    <property type="project" value="InterPro"/>
</dbReference>
<dbReference type="CDD" id="cd16009">
    <property type="entry name" value="PPM"/>
    <property type="match status" value="1"/>
</dbReference>
<dbReference type="FunFam" id="3.30.70.1250:FF:000001">
    <property type="entry name" value="Phosphopentomutase"/>
    <property type="match status" value="1"/>
</dbReference>
<dbReference type="Gene3D" id="3.40.720.10">
    <property type="entry name" value="Alkaline Phosphatase, subunit A"/>
    <property type="match status" value="1"/>
</dbReference>
<dbReference type="Gene3D" id="3.30.70.1250">
    <property type="entry name" value="Phosphopentomutase"/>
    <property type="match status" value="1"/>
</dbReference>
<dbReference type="HAMAP" id="MF_00740">
    <property type="entry name" value="Phosphopentomut"/>
    <property type="match status" value="1"/>
</dbReference>
<dbReference type="InterPro" id="IPR017850">
    <property type="entry name" value="Alkaline_phosphatase_core_sf"/>
</dbReference>
<dbReference type="InterPro" id="IPR010045">
    <property type="entry name" value="DeoB"/>
</dbReference>
<dbReference type="InterPro" id="IPR006124">
    <property type="entry name" value="Metalloenzyme"/>
</dbReference>
<dbReference type="InterPro" id="IPR024052">
    <property type="entry name" value="Phosphopentomutase_DeoB_cap_sf"/>
</dbReference>
<dbReference type="NCBIfam" id="TIGR01696">
    <property type="entry name" value="deoB"/>
    <property type="match status" value="1"/>
</dbReference>
<dbReference type="NCBIfam" id="NF003766">
    <property type="entry name" value="PRK05362.1"/>
    <property type="match status" value="1"/>
</dbReference>
<dbReference type="PANTHER" id="PTHR21110">
    <property type="entry name" value="PHOSPHOPENTOMUTASE"/>
    <property type="match status" value="1"/>
</dbReference>
<dbReference type="PANTHER" id="PTHR21110:SF0">
    <property type="entry name" value="PHOSPHOPENTOMUTASE"/>
    <property type="match status" value="1"/>
</dbReference>
<dbReference type="Pfam" id="PF01676">
    <property type="entry name" value="Metalloenzyme"/>
    <property type="match status" value="1"/>
</dbReference>
<dbReference type="PIRSF" id="PIRSF001491">
    <property type="entry name" value="Ppentomutase"/>
    <property type="match status" value="1"/>
</dbReference>
<dbReference type="SUPFAM" id="SSF53649">
    <property type="entry name" value="Alkaline phosphatase-like"/>
    <property type="match status" value="1"/>
</dbReference>
<dbReference type="SUPFAM" id="SSF143856">
    <property type="entry name" value="DeoB insert domain-like"/>
    <property type="match status" value="1"/>
</dbReference>
<sequence>MSKFNRIHLVVLDSVGIGAAPDANNFVNAGVPDGASDTLGHISKTVGLNVPNMAKIGLGNIPRETPLKTVAAESNPTGYATKLEEVSLGKDTMTGHWEIMGLNITEPFDTFWNGFPEEILTKIEEFSGRKVIREANKPYSGTAVIDDFGPRQMETGELIIYTSADPVLQIAAHEDIIPLDELYRICEYARSITLERPALLGRIIARPYVGEPGNFTRTANRRDLAVSPFSPTVLDKLNEAGIDTYAVGKINDIFNGAGINHDMGHNKSNSHGIDTLLKTMGLAEFEKGFSFTNLVDFDALYGHRRNAHGYRDCLHEFDERLPEIIAAMRENDLLLITADHGNDPTYAGTDHTREYIPLLAYSPAFKGNGLIPVGHFADISATVADNFGVETAMIGESFLDKLV</sequence>
<accession>C1CS61</accession>